<sequence length="596" mass="65923">MGIQTPNGFNLDNSGKRIVVDPVTRIEGHMRVEVNVDADNVIRNAVSTGTMWRGIEVILKNRDPRDAWAFTERICGVCTGTHALTSVRAVENALGITIPENANSIRNLMQLALQVHDHVVHFYHLHALDWVDVVSALSADPRATSTLAQSISNWPLSSPGYFKDLQTRLKKFVESGQLGPFKNGYWGSKAYKLPPEANLMAVAHYLEALDFQKEIVKIHTIFGGKNPHPNWLVGGVPCPINVDGTGAVGAINMERLNLISSIIDRLIEFNEMVYLPDVAAIGSFYKDWLYGGGLSGQSVLAYGDVPEHANDYSAKSLKLPRGAIINGNLSEVFPVDHANPDEIQEFVVHSWYKYPDETKGLHPWDGVTEPNYVLGPNAKGTKTAIEQLDEGGKYSWIKAPRWKGHAMEVGPLARWVVGYAQNKSEFKDPVDKFLRDLNLPTSALFSTLGRTAARALESVWAGRQMRYFQDKLVANIKAGDSSTANVDKWKPESWPKEAKGVGFTEAPRGALAHWIKIKDTKIDNYQCVVPTTWNGSPRDPKGNIGAFEASLMNTPMVNPEQPLEILRTIHSFDPCLACSTHVMSPDGQELAKVKVR</sequence>
<keyword id="KW-1003">Cell membrane</keyword>
<keyword id="KW-0472">Membrane</keyword>
<keyword id="KW-0479">Metal-binding</keyword>
<keyword id="KW-0533">Nickel</keyword>
<keyword id="KW-0560">Oxidoreductase</keyword>
<keyword id="KW-1185">Reference proteome</keyword>
<gene>
    <name type="primary">hupB</name>
    <name type="synonym">hupL</name>
    <name type="ordered locus">bll6941</name>
</gene>
<feature type="chain" id="PRO_0000199710" description="Uptake hydrogenase large subunit">
    <location>
        <begin position="1"/>
        <end position="596"/>
    </location>
</feature>
<feature type="binding site" evidence="2">
    <location>
        <position position="75"/>
    </location>
    <ligand>
        <name>Ni(2+)</name>
        <dbReference type="ChEBI" id="CHEBI:49786"/>
    </ligand>
</feature>
<feature type="binding site" evidence="2">
    <location>
        <position position="78"/>
    </location>
    <ligand>
        <name>Ni(2+)</name>
        <dbReference type="ChEBI" id="CHEBI:49786"/>
    </ligand>
</feature>
<feature type="binding site" evidence="2">
    <location>
        <position position="575"/>
    </location>
    <ligand>
        <name>Ni(2+)</name>
        <dbReference type="ChEBI" id="CHEBI:49786"/>
    </ligand>
</feature>
<feature type="binding site" evidence="2">
    <location>
        <position position="578"/>
    </location>
    <ligand>
        <name>Ni(2+)</name>
        <dbReference type="ChEBI" id="CHEBI:49786"/>
    </ligand>
</feature>
<dbReference type="EC" id="1.12.99.6"/>
<dbReference type="EMBL" id="J04114">
    <property type="protein sequence ID" value="AAA26219.1"/>
    <property type="molecule type" value="Genomic_DNA"/>
</dbReference>
<dbReference type="EMBL" id="BA000040">
    <property type="protein sequence ID" value="BAC52206.1"/>
    <property type="molecule type" value="Genomic_DNA"/>
</dbReference>
<dbReference type="EMBL" id="L24446">
    <property type="protein sequence ID" value="AAD13471.1"/>
    <property type="molecule type" value="Genomic_DNA"/>
</dbReference>
<dbReference type="PIR" id="B31341">
    <property type="entry name" value="HQZJUL"/>
</dbReference>
<dbReference type="RefSeq" id="NP_773581.1">
    <property type="nucleotide sequence ID" value="NC_004463.1"/>
</dbReference>
<dbReference type="RefSeq" id="WP_011089679.1">
    <property type="nucleotide sequence ID" value="NC_004463.1"/>
</dbReference>
<dbReference type="SMR" id="P12636"/>
<dbReference type="FunCoup" id="P12636">
    <property type="interactions" value="258"/>
</dbReference>
<dbReference type="STRING" id="224911.AAV28_32295"/>
<dbReference type="EnsemblBacteria" id="BAC52206">
    <property type="protein sequence ID" value="BAC52206"/>
    <property type="gene ID" value="BAC52206"/>
</dbReference>
<dbReference type="GeneID" id="46493907"/>
<dbReference type="KEGG" id="bja:bll6941"/>
<dbReference type="PATRIC" id="fig|224911.44.peg.6975"/>
<dbReference type="eggNOG" id="COG0374">
    <property type="taxonomic scope" value="Bacteria"/>
</dbReference>
<dbReference type="HOGENOM" id="CLU_030087_0_0_5"/>
<dbReference type="InParanoid" id="P12636"/>
<dbReference type="OrthoDB" id="9761717at2"/>
<dbReference type="PhylomeDB" id="P12636"/>
<dbReference type="Proteomes" id="UP000002526">
    <property type="component" value="Chromosome"/>
</dbReference>
<dbReference type="GO" id="GO:0005886">
    <property type="term" value="C:plasma membrane"/>
    <property type="evidence" value="ECO:0007669"/>
    <property type="project" value="UniProtKB-SubCell"/>
</dbReference>
<dbReference type="GO" id="GO:0008901">
    <property type="term" value="F:ferredoxin hydrogenase activity"/>
    <property type="evidence" value="ECO:0007669"/>
    <property type="project" value="InterPro"/>
</dbReference>
<dbReference type="GO" id="GO:0033748">
    <property type="term" value="F:hydrogenase (acceptor) activity"/>
    <property type="evidence" value="ECO:0007669"/>
    <property type="project" value="UniProtKB-EC"/>
</dbReference>
<dbReference type="GO" id="GO:0016151">
    <property type="term" value="F:nickel cation binding"/>
    <property type="evidence" value="ECO:0007669"/>
    <property type="project" value="InterPro"/>
</dbReference>
<dbReference type="FunFam" id="1.10.645.10:FF:000002">
    <property type="entry name" value="Hydrogenase 2 large subunit"/>
    <property type="match status" value="1"/>
</dbReference>
<dbReference type="Gene3D" id="1.10.645.10">
    <property type="entry name" value="Cytochrome-c3 Hydrogenase, chain B"/>
    <property type="match status" value="1"/>
</dbReference>
<dbReference type="InterPro" id="IPR001501">
    <property type="entry name" value="Ni-dep_hyd_lsu"/>
</dbReference>
<dbReference type="InterPro" id="IPR018194">
    <property type="entry name" value="Ni-dep_hyd_lsu_Ni_BS"/>
</dbReference>
<dbReference type="InterPro" id="IPR029014">
    <property type="entry name" value="NiFe-Hase_large"/>
</dbReference>
<dbReference type="InterPro" id="IPR050867">
    <property type="entry name" value="NiFe/NiFeSe_hydrgnase_LSU"/>
</dbReference>
<dbReference type="PANTHER" id="PTHR42958">
    <property type="entry name" value="HYDROGENASE-2 LARGE CHAIN"/>
    <property type="match status" value="1"/>
</dbReference>
<dbReference type="PANTHER" id="PTHR42958:SF2">
    <property type="entry name" value="UPTAKE HYDROGENASE LARGE SUBUNIT"/>
    <property type="match status" value="1"/>
</dbReference>
<dbReference type="Pfam" id="PF00374">
    <property type="entry name" value="NiFeSe_Hases"/>
    <property type="match status" value="1"/>
</dbReference>
<dbReference type="SUPFAM" id="SSF56762">
    <property type="entry name" value="HydB/Nqo4-like"/>
    <property type="match status" value="1"/>
</dbReference>
<dbReference type="PROSITE" id="PS00507">
    <property type="entry name" value="NI_HGENASE_L_1"/>
    <property type="match status" value="1"/>
</dbReference>
<dbReference type="PROSITE" id="PS00508">
    <property type="entry name" value="NI_HGENASE_L_2"/>
    <property type="match status" value="1"/>
</dbReference>
<reference key="1">
    <citation type="journal article" date="1988" name="Proc. Natl. Acad. Sci. U.S.A.">
        <title>Nucleotide sequence of the genetic loci encoding subunits of Bradyrhizobium japonicum uptake hydrogenase.</title>
        <authorList>
            <person name="Sayavedra-Soto L.A."/>
            <person name="Powell G.K."/>
            <person name="Evans H.J."/>
            <person name="Morris R.O."/>
        </authorList>
    </citation>
    <scope>NUCLEOTIDE SEQUENCE [GENOMIC DNA]</scope>
</reference>
<reference key="2">
    <citation type="journal article" date="2002" name="DNA Res.">
        <title>Complete genomic sequence of nitrogen-fixing symbiotic bacterium Bradyrhizobium japonicum USDA110.</title>
        <authorList>
            <person name="Kaneko T."/>
            <person name="Nakamura Y."/>
            <person name="Sato S."/>
            <person name="Minamisawa K."/>
            <person name="Uchiumi T."/>
            <person name="Sasamoto S."/>
            <person name="Watanabe A."/>
            <person name="Idesawa K."/>
            <person name="Iriguchi M."/>
            <person name="Kawashima K."/>
            <person name="Kohara M."/>
            <person name="Matsumoto M."/>
            <person name="Shimpo S."/>
            <person name="Tsuruoka H."/>
            <person name="Wada T."/>
            <person name="Yamada M."/>
            <person name="Tabata S."/>
        </authorList>
    </citation>
    <scope>NUCLEOTIDE SEQUENCE [LARGE SCALE GENOMIC DNA]</scope>
    <source>
        <strain>JCM 10833 / BCRC 13528 / IAM 13628 / NBRC 14792 / USDA 110</strain>
    </source>
</reference>
<reference key="3">
    <citation type="journal article" date="1994" name="Gene">
        <title>Sequence and characterization of three genes within the hydrogenase gene cluster of Bradyrhizobium japonicum.</title>
        <authorList>
            <person name="Fu C."/>
            <person name="Maier R.J."/>
        </authorList>
    </citation>
    <scope>NUCLEOTIDE SEQUENCE [GENOMIC DNA] OF 589-596</scope>
</reference>
<comment type="function">
    <text>This enzyme recycles the H(2) produced by nitrogenase to increase the production of ATP and to protect nitrogenase against inhibition or damage by O(2) under carbon- or phosphate-limited conditions.</text>
</comment>
<comment type="catalytic activity">
    <reaction>
        <text>H2 + A = AH2</text>
        <dbReference type="Rhea" id="RHEA:12116"/>
        <dbReference type="ChEBI" id="CHEBI:13193"/>
        <dbReference type="ChEBI" id="CHEBI:17499"/>
        <dbReference type="ChEBI" id="CHEBI:18276"/>
        <dbReference type="EC" id="1.12.99.6"/>
    </reaction>
</comment>
<comment type="cofactor">
    <cofactor evidence="1">
        <name>Ni(2+)</name>
        <dbReference type="ChEBI" id="CHEBI:49786"/>
    </cofactor>
    <text evidence="1">Binds 1 nickel ion per subunit.</text>
</comment>
<comment type="subunit">
    <text>Heterodimer of a large and a small subunit.</text>
</comment>
<comment type="subcellular location">
    <subcellularLocation>
        <location>Cell membrane</location>
        <topology>Peripheral membrane protein</topology>
    </subcellularLocation>
</comment>
<comment type="similarity">
    <text evidence="3">Belongs to the [NiFe]/[NiFeSe] hydrogenase large subunit family.</text>
</comment>
<protein>
    <recommendedName>
        <fullName>Uptake hydrogenase large subunit</fullName>
        <ecNumber>1.12.99.6</ecNumber>
    </recommendedName>
    <alternativeName>
        <fullName>Hydrogenlyase</fullName>
    </alternativeName>
    <alternativeName>
        <fullName>Membrane-bound hydrogenase large subunit</fullName>
    </alternativeName>
</protein>
<evidence type="ECO:0000250" key="1"/>
<evidence type="ECO:0000255" key="2"/>
<evidence type="ECO:0000305" key="3"/>
<accession>P12636</accession>
<organism>
    <name type="scientific">Bradyrhizobium diazoefficiens (strain JCM 10833 / BCRC 13528 / IAM 13628 / NBRC 14792 / USDA 110)</name>
    <dbReference type="NCBI Taxonomy" id="224911"/>
    <lineage>
        <taxon>Bacteria</taxon>
        <taxon>Pseudomonadati</taxon>
        <taxon>Pseudomonadota</taxon>
        <taxon>Alphaproteobacteria</taxon>
        <taxon>Hyphomicrobiales</taxon>
        <taxon>Nitrobacteraceae</taxon>
        <taxon>Bradyrhizobium</taxon>
    </lineage>
</organism>
<proteinExistence type="inferred from homology"/>
<name>MBHL_BRADU</name>